<accession>B3NRC6</accession>
<dbReference type="EMBL" id="CH954179">
    <property type="protein sequence ID" value="EDV56078.1"/>
    <property type="molecule type" value="Genomic_DNA"/>
</dbReference>
<dbReference type="SMR" id="B3NRC6"/>
<dbReference type="EnsemblMetazoa" id="FBtr0142496">
    <property type="protein sequence ID" value="FBpp0140988"/>
    <property type="gene ID" value="FBgn0114614"/>
</dbReference>
<dbReference type="EnsemblMetazoa" id="XM_001975642.3">
    <property type="protein sequence ID" value="XP_001975678.1"/>
    <property type="gene ID" value="LOC6549368"/>
</dbReference>
<dbReference type="GeneID" id="6549368"/>
<dbReference type="KEGG" id="der:6549368"/>
<dbReference type="CTD" id="10480"/>
<dbReference type="eggNOG" id="KOG2753">
    <property type="taxonomic scope" value="Eukaryota"/>
</dbReference>
<dbReference type="HOGENOM" id="CLU_035254_1_0_1"/>
<dbReference type="OMA" id="VCLKALW"/>
<dbReference type="OrthoDB" id="7900529at2759"/>
<dbReference type="PhylomeDB" id="B3NRC6"/>
<dbReference type="Proteomes" id="UP000008711">
    <property type="component" value="Unassembled WGS sequence"/>
</dbReference>
<dbReference type="GO" id="GO:0005829">
    <property type="term" value="C:cytosol"/>
    <property type="evidence" value="ECO:0007669"/>
    <property type="project" value="EnsemblMetazoa"/>
</dbReference>
<dbReference type="GO" id="GO:0016282">
    <property type="term" value="C:eukaryotic 43S preinitiation complex"/>
    <property type="evidence" value="ECO:0007669"/>
    <property type="project" value="UniProtKB-UniRule"/>
</dbReference>
<dbReference type="GO" id="GO:0033290">
    <property type="term" value="C:eukaryotic 48S preinitiation complex"/>
    <property type="evidence" value="ECO:0007669"/>
    <property type="project" value="UniProtKB-UniRule"/>
</dbReference>
<dbReference type="GO" id="GO:0071541">
    <property type="term" value="C:eukaryotic translation initiation factor 3 complex, eIF3m"/>
    <property type="evidence" value="ECO:0007669"/>
    <property type="project" value="UniProtKB-UniRule"/>
</dbReference>
<dbReference type="GO" id="GO:0005794">
    <property type="term" value="C:Golgi apparatus"/>
    <property type="evidence" value="ECO:0007669"/>
    <property type="project" value="UniProtKB-SubCell"/>
</dbReference>
<dbReference type="GO" id="GO:0070865">
    <property type="term" value="C:investment cone"/>
    <property type="evidence" value="ECO:0007669"/>
    <property type="project" value="EnsemblMetazoa"/>
</dbReference>
<dbReference type="GO" id="GO:0089720">
    <property type="term" value="F:caspase binding"/>
    <property type="evidence" value="ECO:0007669"/>
    <property type="project" value="EnsemblMetazoa"/>
</dbReference>
<dbReference type="GO" id="GO:0140608">
    <property type="term" value="F:cysteine-type endopeptidase activator activity"/>
    <property type="evidence" value="ECO:0007669"/>
    <property type="project" value="EnsemblMetazoa"/>
</dbReference>
<dbReference type="GO" id="GO:0003743">
    <property type="term" value="F:translation initiation factor activity"/>
    <property type="evidence" value="ECO:0007669"/>
    <property type="project" value="UniProtKB-UniRule"/>
</dbReference>
<dbReference type="GO" id="GO:0001732">
    <property type="term" value="P:formation of cytoplasmic translation initiation complex"/>
    <property type="evidence" value="ECO:0007669"/>
    <property type="project" value="UniProtKB-UniRule"/>
</dbReference>
<dbReference type="GO" id="GO:0007030">
    <property type="term" value="P:Golgi organization"/>
    <property type="evidence" value="ECO:0007669"/>
    <property type="project" value="EnsemblMetazoa"/>
</dbReference>
<dbReference type="GO" id="GO:0009306">
    <property type="term" value="P:protein secretion"/>
    <property type="evidence" value="ECO:0007669"/>
    <property type="project" value="EnsemblMetazoa"/>
</dbReference>
<dbReference type="GO" id="GO:0007291">
    <property type="term" value="P:sperm individualization"/>
    <property type="evidence" value="ECO:0007669"/>
    <property type="project" value="EnsemblMetazoa"/>
</dbReference>
<dbReference type="HAMAP" id="MF_03012">
    <property type="entry name" value="eIF3m"/>
    <property type="match status" value="1"/>
</dbReference>
<dbReference type="InterPro" id="IPR045237">
    <property type="entry name" value="COPS7/eIF3m"/>
</dbReference>
<dbReference type="InterPro" id="IPR027528">
    <property type="entry name" value="eIF3m"/>
</dbReference>
<dbReference type="InterPro" id="IPR040750">
    <property type="entry name" value="eIF3m_C_helix"/>
</dbReference>
<dbReference type="InterPro" id="IPR000717">
    <property type="entry name" value="PCI_dom"/>
</dbReference>
<dbReference type="InterPro" id="IPR036390">
    <property type="entry name" value="WH_DNA-bd_sf"/>
</dbReference>
<dbReference type="PANTHER" id="PTHR15350">
    <property type="entry name" value="COP9 SIGNALOSOME COMPLEX SUBUNIT 7/DENDRITIC CELL PROTEIN GA17"/>
    <property type="match status" value="1"/>
</dbReference>
<dbReference type="PANTHER" id="PTHR15350:SF2">
    <property type="entry name" value="EUKARYOTIC TRANSLATION INITIATION FACTOR 3 SUBUNIT M"/>
    <property type="match status" value="1"/>
</dbReference>
<dbReference type="Pfam" id="PF18005">
    <property type="entry name" value="eIF3m_C_helix"/>
    <property type="match status" value="1"/>
</dbReference>
<dbReference type="Pfam" id="PF01399">
    <property type="entry name" value="PCI"/>
    <property type="match status" value="1"/>
</dbReference>
<dbReference type="SMART" id="SM00088">
    <property type="entry name" value="PINT"/>
    <property type="match status" value="1"/>
</dbReference>
<dbReference type="SUPFAM" id="SSF46785">
    <property type="entry name" value="Winged helix' DNA-binding domain"/>
    <property type="match status" value="1"/>
</dbReference>
<dbReference type="PROSITE" id="PS50250">
    <property type="entry name" value="PCI"/>
    <property type="match status" value="1"/>
</dbReference>
<protein>
    <recommendedName>
        <fullName evidence="1">Eukaryotic translation initiation factor 3 subunit M</fullName>
        <shortName evidence="1">eIF3m</shortName>
    </recommendedName>
    <alternativeName>
        <fullName evidence="1">Transport and Golgi organization protein 7</fullName>
        <shortName evidence="1">Tango-7</shortName>
    </alternativeName>
</protein>
<sequence length="387" mass="44108">MTSHPVFIDLSLDEQVQELRKYFKKLGAEISSEKSNKGVEDDLHKIIGVCDVCFKDGEPSQIDGILNSIVSIMITIPLDRGENIVLAYCEKMTKAPNLPLGKVCLQSLWRLFNNLDTASPLRYHVYYHLVQVAKQCEQVLEVFTGVDQLKSQFANCPPSSEQMQKLYRLLHDVTKDTNLELSSKVMIELLGTYTADNACVAREDAMKCIVTALADPNTFLLDPLLALKPVRFLEGDLIHDLLSIFVSEKLPAYVQFYEDHREFVNSQGLNHEQNMKKMRLLTFMQLAESSPEMTFETLTKELQINEDEVEPFVIEVLKTKLVRARLDQANHKVHITSTMHRTFGAPQWEQLRDLLQAWKENLSTVREGLTSVSSAQLDLARSQKLIH</sequence>
<feature type="chain" id="PRO_0000365999" description="Eukaryotic translation initiation factor 3 subunit M">
    <location>
        <begin position="1"/>
        <end position="387"/>
    </location>
</feature>
<feature type="domain" description="PCI" evidence="2">
    <location>
        <begin position="181"/>
        <end position="340"/>
    </location>
</feature>
<gene>
    <name evidence="1" type="primary">Tango7</name>
    <name type="ORF">GG22442</name>
</gene>
<keyword id="KW-0963">Cytoplasm</keyword>
<keyword id="KW-0333">Golgi apparatus</keyword>
<keyword id="KW-0396">Initiation factor</keyword>
<keyword id="KW-0648">Protein biosynthesis</keyword>
<comment type="function">
    <text evidence="1">Component of the eukaryotic translation initiation factor 3 (eIF-3) complex, which is involved in protein synthesis of a specialized repertoire of mRNAs and, together with other initiation factors, stimulates binding of mRNA and methionyl-tRNAi to the 40S ribosome. The eIF-3 complex specifically targets and initiates translation of a subset of mRNAs involved in cell proliferation.</text>
</comment>
<comment type="subunit">
    <text evidence="1">Component of the eukaryotic translation initiation factor 3 (eIF-3) complex. The eIF-3 complex interacts with pix.</text>
</comment>
<comment type="subcellular location">
    <subcellularLocation>
        <location evidence="1">Cytoplasm</location>
    </subcellularLocation>
    <subcellularLocation>
        <location evidence="1">Golgi apparatus</location>
    </subcellularLocation>
</comment>
<comment type="similarity">
    <text evidence="1">Belongs to the eIF-3 subunit M family.</text>
</comment>
<reference key="1">
    <citation type="journal article" date="2007" name="Nature">
        <title>Evolution of genes and genomes on the Drosophila phylogeny.</title>
        <authorList>
            <consortium name="Drosophila 12 genomes consortium"/>
        </authorList>
    </citation>
    <scope>NUCLEOTIDE SEQUENCE [LARGE SCALE GENOMIC DNA]</scope>
    <source>
        <strain>Tucson 14021-0224.01</strain>
    </source>
</reference>
<evidence type="ECO:0000255" key="1">
    <source>
        <dbReference type="HAMAP-Rule" id="MF_03012"/>
    </source>
</evidence>
<evidence type="ECO:0000255" key="2">
    <source>
        <dbReference type="PROSITE-ProRule" id="PRU01185"/>
    </source>
</evidence>
<organism>
    <name type="scientific">Drosophila erecta</name>
    <name type="common">Fruit fly</name>
    <dbReference type="NCBI Taxonomy" id="7220"/>
    <lineage>
        <taxon>Eukaryota</taxon>
        <taxon>Metazoa</taxon>
        <taxon>Ecdysozoa</taxon>
        <taxon>Arthropoda</taxon>
        <taxon>Hexapoda</taxon>
        <taxon>Insecta</taxon>
        <taxon>Pterygota</taxon>
        <taxon>Neoptera</taxon>
        <taxon>Endopterygota</taxon>
        <taxon>Diptera</taxon>
        <taxon>Brachycera</taxon>
        <taxon>Muscomorpha</taxon>
        <taxon>Ephydroidea</taxon>
        <taxon>Drosophilidae</taxon>
        <taxon>Drosophila</taxon>
        <taxon>Sophophora</taxon>
    </lineage>
</organism>
<proteinExistence type="inferred from homology"/>
<name>EIF3M_DROER</name>